<proteinExistence type="uncertain"/>
<gene>
    <name evidence="4" type="ordered locus">YHR165W-A</name>
</gene>
<reference key="1">
    <citation type="journal article" date="1994" name="Science">
        <title>Complete nucleotide sequence of Saccharomyces cerevisiae chromosome VIII.</title>
        <authorList>
            <person name="Johnston M."/>
            <person name="Andrews S."/>
            <person name="Brinkman R."/>
            <person name="Cooper J."/>
            <person name="Ding H."/>
            <person name="Dover J."/>
            <person name="Du Z."/>
            <person name="Favello A."/>
            <person name="Fulton L."/>
            <person name="Gattung S."/>
            <person name="Geisel C."/>
            <person name="Kirsten J."/>
            <person name="Kucaba T."/>
            <person name="Hillier L.W."/>
            <person name="Jier M."/>
            <person name="Johnston L."/>
            <person name="Langston Y."/>
            <person name="Latreille P."/>
            <person name="Louis E.J."/>
            <person name="Macri C."/>
            <person name="Mardis E."/>
            <person name="Menezes S."/>
            <person name="Mouser L."/>
            <person name="Nhan M."/>
            <person name="Rifkin L."/>
            <person name="Riles L."/>
            <person name="St Peter H."/>
            <person name="Trevaskis E."/>
            <person name="Vaughan K."/>
            <person name="Vignati D."/>
            <person name="Wilcox L."/>
            <person name="Wohldman P."/>
            <person name="Waterston R."/>
            <person name="Wilson R."/>
            <person name="Vaudin M."/>
        </authorList>
    </citation>
    <scope>NUCLEOTIDE SEQUENCE [LARGE SCALE GENOMIC DNA]</scope>
    <source>
        <strain>ATCC 204508 / S288c</strain>
    </source>
</reference>
<reference key="2">
    <citation type="journal article" date="2014" name="G3 (Bethesda)">
        <title>The reference genome sequence of Saccharomyces cerevisiae: Then and now.</title>
        <authorList>
            <person name="Engel S.R."/>
            <person name="Dietrich F.S."/>
            <person name="Fisk D.G."/>
            <person name="Binkley G."/>
            <person name="Balakrishnan R."/>
            <person name="Costanzo M.C."/>
            <person name="Dwight S.S."/>
            <person name="Hitz B.C."/>
            <person name="Karra K."/>
            <person name="Nash R.S."/>
            <person name="Weng S."/>
            <person name="Wong E.D."/>
            <person name="Lloyd P."/>
            <person name="Skrzypek M.S."/>
            <person name="Miyasato S.R."/>
            <person name="Simison M."/>
            <person name="Cherry J.M."/>
        </authorList>
    </citation>
    <scope>GENOME REANNOTATION</scope>
    <source>
        <strain>ATCC 204508 / S288c</strain>
    </source>
</reference>
<evidence type="ECO:0000256" key="1">
    <source>
        <dbReference type="SAM" id="MobiDB-lite"/>
    </source>
</evidence>
<evidence type="ECO:0000305" key="2"/>
<evidence type="ECO:0000305" key="3">
    <source>
    </source>
</evidence>
<evidence type="ECO:0000312" key="4">
    <source>
        <dbReference type="SGD" id="S000028783"/>
    </source>
</evidence>
<name>YH165_YEAST</name>
<protein>
    <recommendedName>
        <fullName evidence="2">Putative uncharacterized protein YHR165W-A</fullName>
    </recommendedName>
</protein>
<organism>
    <name type="scientific">Saccharomyces cerevisiae (strain ATCC 204508 / S288c)</name>
    <name type="common">Baker's yeast</name>
    <dbReference type="NCBI Taxonomy" id="559292"/>
    <lineage>
        <taxon>Eukaryota</taxon>
        <taxon>Fungi</taxon>
        <taxon>Dikarya</taxon>
        <taxon>Ascomycota</taxon>
        <taxon>Saccharomycotina</taxon>
        <taxon>Saccharomycetes</taxon>
        <taxon>Saccharomycetales</taxon>
        <taxon>Saccharomycetaceae</taxon>
        <taxon>Saccharomyces</taxon>
    </lineage>
</organism>
<comment type="miscellaneous">
    <text evidence="2">Completely overlaps PRP8.</text>
</comment>
<comment type="caution">
    <text evidence="3">Product of a dubious gene prediction unlikely to encode a functional protein. Because of that it is not part of the S.cerevisiae S288c complete/reference proteome set.</text>
</comment>
<accession>A0A023PZE4</accession>
<sequence length="103" mass="9601">MSNFLFPCNSTFFSALVSNSSRPGGGGGGGNVKSTISSAFISKLLGGGGGGGRNVSSFTDDGTIGLSSSSISYPGGGGGGGGSAKSLSSSKPGGGGGSPLIFL</sequence>
<feature type="chain" id="PRO_0000431027" description="Putative uncharacterized protein YHR165W-A">
    <location>
        <begin position="1"/>
        <end position="103"/>
    </location>
</feature>
<feature type="region of interest" description="Disordered" evidence="1">
    <location>
        <begin position="69"/>
        <end position="103"/>
    </location>
</feature>
<feature type="compositionally biased region" description="Gly residues" evidence="1">
    <location>
        <begin position="74"/>
        <end position="83"/>
    </location>
</feature>
<feature type="compositionally biased region" description="Gly residues" evidence="1">
    <location>
        <begin position="92"/>
        <end position="103"/>
    </location>
</feature>
<dbReference type="EMBL" id="KJ412263">
    <property type="protein sequence ID" value="AHX39306.1"/>
    <property type="molecule type" value="Genomic_DNA"/>
</dbReference>
<dbReference type="PaxDb" id="4932-YHR165W-A"/>
<dbReference type="EnsemblFungi" id="YHR165W-A_mRNA">
    <property type="protein sequence ID" value="YHR165W-A"/>
    <property type="gene ID" value="YHR165W-A"/>
</dbReference>
<dbReference type="AGR" id="SGD:S000028783"/>
<dbReference type="SGD" id="S000028783">
    <property type="gene designation" value="YHR165W-A"/>
</dbReference>
<dbReference type="HOGENOM" id="CLU_2265265_0_0_1"/>